<proteinExistence type="evidence at protein level"/>
<gene>
    <name evidence="8" type="primary">glnT</name>
    <name type="ordered locus">R00090</name>
    <name type="ORF">SMc02613</name>
</gene>
<evidence type="ECO:0000250" key="1">
    <source>
        <dbReference type="UniProtKB" id="P0A1P6"/>
    </source>
</evidence>
<evidence type="ECO:0000250" key="2">
    <source>
        <dbReference type="UniProtKB" id="P12425"/>
    </source>
</evidence>
<evidence type="ECO:0000250" key="3">
    <source>
        <dbReference type="UniProtKB" id="P77961"/>
    </source>
</evidence>
<evidence type="ECO:0000250" key="4">
    <source>
        <dbReference type="UniProtKB" id="P9WN39"/>
    </source>
</evidence>
<evidence type="ECO:0000255" key="5">
    <source>
        <dbReference type="PROSITE-ProRule" id="PRU01330"/>
    </source>
</evidence>
<evidence type="ECO:0000255" key="6">
    <source>
        <dbReference type="PROSITE-ProRule" id="PRU01331"/>
    </source>
</evidence>
<evidence type="ECO:0000269" key="7">
    <source>
    </source>
</evidence>
<evidence type="ECO:0000303" key="8">
    <source>
    </source>
</evidence>
<evidence type="ECO:0000305" key="9"/>
<evidence type="ECO:0000305" key="10">
    <source>
    </source>
</evidence>
<dbReference type="EC" id="6.3.1.2" evidence="7"/>
<dbReference type="EMBL" id="AF055582">
    <property type="protein sequence ID" value="AAC62223.1"/>
    <property type="molecule type" value="Genomic_DNA"/>
</dbReference>
<dbReference type="EMBL" id="AL591688">
    <property type="protein sequence ID" value="CAC41477.1"/>
    <property type="molecule type" value="Genomic_DNA"/>
</dbReference>
<dbReference type="RefSeq" id="NP_384196.1">
    <property type="nucleotide sequence ID" value="NC_003047.1"/>
</dbReference>
<dbReference type="RefSeq" id="WP_003532529.1">
    <property type="nucleotide sequence ID" value="NC_003047.1"/>
</dbReference>
<dbReference type="SMR" id="O87393"/>
<dbReference type="EnsemblBacteria" id="CAC41477">
    <property type="protein sequence ID" value="CAC41477"/>
    <property type="gene ID" value="SMc02613"/>
</dbReference>
<dbReference type="KEGG" id="sme:SMc02613"/>
<dbReference type="PATRIC" id="fig|266834.11.peg.1447"/>
<dbReference type="eggNOG" id="COG0174">
    <property type="taxonomic scope" value="Bacteria"/>
</dbReference>
<dbReference type="HOGENOM" id="CLU_017290_1_3_5"/>
<dbReference type="OrthoDB" id="9807095at2"/>
<dbReference type="Proteomes" id="UP000001976">
    <property type="component" value="Chromosome"/>
</dbReference>
<dbReference type="GO" id="GO:0005524">
    <property type="term" value="F:ATP binding"/>
    <property type="evidence" value="ECO:0007669"/>
    <property type="project" value="UniProtKB-KW"/>
</dbReference>
<dbReference type="GO" id="GO:0004356">
    <property type="term" value="F:glutamine synthetase activity"/>
    <property type="evidence" value="ECO:0007669"/>
    <property type="project" value="UniProtKB-EC"/>
</dbReference>
<dbReference type="GO" id="GO:0046872">
    <property type="term" value="F:metal ion binding"/>
    <property type="evidence" value="ECO:0007669"/>
    <property type="project" value="UniProtKB-KW"/>
</dbReference>
<dbReference type="GO" id="GO:0006542">
    <property type="term" value="P:glutamine biosynthetic process"/>
    <property type="evidence" value="ECO:0007669"/>
    <property type="project" value="InterPro"/>
</dbReference>
<dbReference type="GO" id="GO:0009399">
    <property type="term" value="P:nitrogen fixation"/>
    <property type="evidence" value="ECO:0007669"/>
    <property type="project" value="UniProtKB-KW"/>
</dbReference>
<dbReference type="Gene3D" id="3.10.20.70">
    <property type="entry name" value="Glutamine synthetase, N-terminal domain"/>
    <property type="match status" value="1"/>
</dbReference>
<dbReference type="Gene3D" id="3.30.590.10">
    <property type="entry name" value="Glutamine synthetase/guanido kinase, catalytic domain"/>
    <property type="match status" value="1"/>
</dbReference>
<dbReference type="InterPro" id="IPR008147">
    <property type="entry name" value="Gln_synt_N"/>
</dbReference>
<dbReference type="InterPro" id="IPR036651">
    <property type="entry name" value="Gln_synt_N_sf"/>
</dbReference>
<dbReference type="InterPro" id="IPR014746">
    <property type="entry name" value="Gln_synth/guanido_kin_cat_dom"/>
</dbReference>
<dbReference type="InterPro" id="IPR008146">
    <property type="entry name" value="Gln_synth_cat_dom"/>
</dbReference>
<dbReference type="InterPro" id="IPR027303">
    <property type="entry name" value="Gln_synth_gly_rich_site"/>
</dbReference>
<dbReference type="InterPro" id="IPR017536">
    <property type="entry name" value="Glutamine_synthetase_typeIII"/>
</dbReference>
<dbReference type="NCBIfam" id="TIGR03105">
    <property type="entry name" value="gln_synth_III"/>
    <property type="match status" value="1"/>
</dbReference>
<dbReference type="PANTHER" id="PTHR43785">
    <property type="entry name" value="GAMMA-GLUTAMYLPUTRESCINE SYNTHETASE"/>
    <property type="match status" value="1"/>
</dbReference>
<dbReference type="PANTHER" id="PTHR43785:SF14">
    <property type="entry name" value="GLUTAMINE SYNTHETASE"/>
    <property type="match status" value="1"/>
</dbReference>
<dbReference type="Pfam" id="PF00120">
    <property type="entry name" value="Gln-synt_C"/>
    <property type="match status" value="1"/>
</dbReference>
<dbReference type="SMART" id="SM01230">
    <property type="entry name" value="Gln-synt_C"/>
    <property type="match status" value="1"/>
</dbReference>
<dbReference type="SUPFAM" id="SSF54368">
    <property type="entry name" value="Glutamine synthetase, N-terminal domain"/>
    <property type="match status" value="1"/>
</dbReference>
<dbReference type="SUPFAM" id="SSF55931">
    <property type="entry name" value="Glutamine synthetase/guanido kinase"/>
    <property type="match status" value="1"/>
</dbReference>
<dbReference type="PROSITE" id="PS00181">
    <property type="entry name" value="GLNA_ATP"/>
    <property type="match status" value="1"/>
</dbReference>
<dbReference type="PROSITE" id="PS51986">
    <property type="entry name" value="GS_BETA_GRASP"/>
    <property type="match status" value="1"/>
</dbReference>
<dbReference type="PROSITE" id="PS51987">
    <property type="entry name" value="GS_CATALYTIC"/>
    <property type="match status" value="1"/>
</dbReference>
<name>GLNA3_RHIME</name>
<comment type="function">
    <text evidence="7">Catalyzes the ATP-dependent biosynthesis of glutamine from glutamate and ammonia.</text>
</comment>
<comment type="catalytic activity">
    <reaction evidence="7">
        <text>L-glutamate + NH4(+) + ATP = L-glutamine + ADP + phosphate + H(+)</text>
        <dbReference type="Rhea" id="RHEA:16169"/>
        <dbReference type="ChEBI" id="CHEBI:15378"/>
        <dbReference type="ChEBI" id="CHEBI:28938"/>
        <dbReference type="ChEBI" id="CHEBI:29985"/>
        <dbReference type="ChEBI" id="CHEBI:30616"/>
        <dbReference type="ChEBI" id="CHEBI:43474"/>
        <dbReference type="ChEBI" id="CHEBI:58359"/>
        <dbReference type="ChEBI" id="CHEBI:456216"/>
        <dbReference type="EC" id="6.3.1.2"/>
    </reaction>
</comment>
<comment type="cofactor">
    <cofactor evidence="7">
        <name>Mg(2+)</name>
        <dbReference type="ChEBI" id="CHEBI:18420"/>
    </cofactor>
    <text evidence="2">Binds 2 Mg(2+) ions per subunit.</text>
</comment>
<comment type="activity regulation">
    <text evidence="7">Inhibited by methionine sulfoximine, ADP and pyrophosphate, but not by various nitrogen-containing metabolites that inhibit other GS enzymes.</text>
</comment>
<comment type="biophysicochemical properties">
    <kinetics>
        <KM evidence="7">13.3 mM for glutamate</KM>
        <KM evidence="7">33 mM for ammonium</KM>
    </kinetics>
    <phDependence>
        <text evidence="7">Optimum pH is 6.8.</text>
    </phDependence>
    <temperatureDependence>
        <text evidence="7">Optimum temperature is 50 degrees Celsius.</text>
    </temperatureDependence>
</comment>
<comment type="subunit">
    <text evidence="7">Homooctamer.</text>
</comment>
<comment type="miscellaneous">
    <text evidence="10">Can grow, in the absence of GSI and GSII glutamine synthetases, without a glutamine supplement in minimal medium that contains both ammonium and glutamate. However, given the high glutamate and ammonium substrate Km values, glutamine synthase is probably a secondary activity of GlnT.</text>
</comment>
<comment type="miscellaneous">
    <text evidence="9">Two forms of glutamine synthetase (GSI and GSIII) can be found in this nitrogen fixing bacteria, GSI is a typical prokaryotic glutamine synthetase whereas GSIII is a divergent type with very low sequence similarity to the type I and II enzymes.</text>
</comment>
<comment type="similarity">
    <text evidence="9">Belongs to the glutamine synthetase family.</text>
</comment>
<accession>O87393</accession>
<feature type="chain" id="PRO_0000153227" description="Glutamine synthetase">
    <location>
        <begin position="1"/>
        <end position="435"/>
    </location>
</feature>
<feature type="domain" description="GS beta-grasp" evidence="5">
    <location>
        <begin position="12"/>
        <end position="94"/>
    </location>
</feature>
<feature type="domain" description="GS catalytic" evidence="6">
    <location>
        <begin position="100"/>
        <end position="435"/>
    </location>
</feature>
<feature type="binding site" evidence="2">
    <location>
        <position position="123"/>
    </location>
    <ligand>
        <name>Mg(2+)</name>
        <dbReference type="ChEBI" id="CHEBI:18420"/>
        <label>1</label>
    </ligand>
</feature>
<feature type="binding site" evidence="2">
    <location>
        <position position="125"/>
    </location>
    <ligand>
        <name>Mg(2+)</name>
        <dbReference type="ChEBI" id="CHEBI:18420"/>
        <label>2</label>
    </ligand>
</feature>
<feature type="binding site" evidence="2">
    <location>
        <position position="180"/>
    </location>
    <ligand>
        <name>Mg(2+)</name>
        <dbReference type="ChEBI" id="CHEBI:18420"/>
        <label>2</label>
    </ligand>
</feature>
<feature type="binding site" evidence="2">
    <location>
        <position position="187"/>
    </location>
    <ligand>
        <name>Mg(2+)</name>
        <dbReference type="ChEBI" id="CHEBI:18420"/>
        <label>2</label>
    </ligand>
</feature>
<feature type="binding site" evidence="2">
    <location>
        <position position="232"/>
    </location>
    <ligand>
        <name>L-glutamate</name>
        <dbReference type="ChEBI" id="CHEBI:29985"/>
    </ligand>
</feature>
<feature type="binding site" evidence="2">
    <location>
        <position position="236"/>
    </location>
    <ligand>
        <name>Mg(2+)</name>
        <dbReference type="ChEBI" id="CHEBI:18420"/>
        <label>1</label>
    </ligand>
</feature>
<feature type="binding site" evidence="3">
    <location>
        <position position="240"/>
    </location>
    <ligand>
        <name>ATP</name>
        <dbReference type="ChEBI" id="CHEBI:30616"/>
    </ligand>
</feature>
<feature type="binding site" evidence="1">
    <location>
        <position position="291"/>
    </location>
    <ligand>
        <name>L-glutamate</name>
        <dbReference type="ChEBI" id="CHEBI:29985"/>
    </ligand>
</feature>
<feature type="binding site" evidence="4">
    <location>
        <position position="315"/>
    </location>
    <ligand>
        <name>ATP</name>
        <dbReference type="ChEBI" id="CHEBI:30616"/>
    </ligand>
</feature>
<feature type="binding site" evidence="4">
    <location>
        <position position="315"/>
    </location>
    <ligand>
        <name>L-glutamate</name>
        <dbReference type="ChEBI" id="CHEBI:29985"/>
    </ligand>
</feature>
<feature type="binding site" evidence="4">
    <location>
        <position position="320"/>
    </location>
    <ligand>
        <name>ATP</name>
        <dbReference type="ChEBI" id="CHEBI:30616"/>
    </ligand>
</feature>
<feature type="binding site" evidence="2">
    <location>
        <position position="328"/>
    </location>
    <ligand>
        <name>Mg(2+)</name>
        <dbReference type="ChEBI" id="CHEBI:18420"/>
        <label>1</label>
    </ligand>
</feature>
<feature type="binding site" evidence="1">
    <location>
        <position position="330"/>
    </location>
    <ligand>
        <name>L-glutamate</name>
        <dbReference type="ChEBI" id="CHEBI:29985"/>
    </ligand>
</feature>
<protein>
    <recommendedName>
        <fullName evidence="8">Glutamine synthetase</fullName>
        <shortName evidence="8">GS</shortName>
        <ecNumber evidence="7">6.3.1.2</ecNumber>
    </recommendedName>
    <alternativeName>
        <fullName evidence="9">Glutamate--ammonia ligase</fullName>
    </alternativeName>
    <alternativeName>
        <fullName evidence="8">Glutamine synthetase III</fullName>
        <shortName evidence="8">GSIII</shortName>
    </alternativeName>
</protein>
<keyword id="KW-0067">ATP-binding</keyword>
<keyword id="KW-0436">Ligase</keyword>
<keyword id="KW-0460">Magnesium</keyword>
<keyword id="KW-0479">Metal-binding</keyword>
<keyword id="KW-0535">Nitrogen fixation</keyword>
<keyword id="KW-0547">Nucleotide-binding</keyword>
<keyword id="KW-1185">Reference proteome</keyword>
<sequence length="435" mass="48481">MTLDLSTFAREKGVKYFMISYTDLFGGQRAKLVPAEAIADMQKGGAGFAGFATWFDLTPAHPDLFALPDASAVIQLPWKKDVAWVAADCIMDDAPVEQAPRVVLKKLVAEAAQEGLRVKTGVEPEFFLISPDGSKISDTFDTAEKPCYDQQAIMRRYDVIAEICDYMLELGWKPYQNDHEDANGQFEMNWEYDDALRTADKHSFFKFMVKSIAEKHGLRATFMPKPFKGLTGNGCHCHISVWDLAGEVNAFADNKAEFGLSAEGRHFLGGIMKHASALAAVTNPTVNSYKRINAPRTISGATWAPNSVTWTGNNRTHMVRVPGPGRFELRLPDGAVNPYLLQAIIIAAGLSGVRSKADPGRHYDIDMYKDGHKVTDAPKLPLNLLDALREYNRDEELQEALGREFSAAYLKLKQGEWNTYCSQFTEWEHQTTLDV</sequence>
<organism>
    <name type="scientific">Rhizobium meliloti (strain 1021)</name>
    <name type="common">Ensifer meliloti</name>
    <name type="synonym">Sinorhizobium meliloti</name>
    <dbReference type="NCBI Taxonomy" id="266834"/>
    <lineage>
        <taxon>Bacteria</taxon>
        <taxon>Pseudomonadati</taxon>
        <taxon>Pseudomonadota</taxon>
        <taxon>Alphaproteobacteria</taxon>
        <taxon>Hyphomicrobiales</taxon>
        <taxon>Rhizobiaceae</taxon>
        <taxon>Sinorhizobium/Ensifer group</taxon>
        <taxon>Sinorhizobium</taxon>
    </lineage>
</organism>
<reference key="1">
    <citation type="submission" date="1998-03" db="EMBL/GenBank/DDBJ databases">
        <authorList>
            <person name="Powers E.L."/>
            <person name="Vuyyuru V."/>
            <person name="Kahn M.L."/>
        </authorList>
    </citation>
    <scope>NUCLEOTIDE SEQUENCE [GENOMIC DNA]</scope>
    <source>
        <strain>1021</strain>
    </source>
</reference>
<reference key="2">
    <citation type="journal article" date="2001" name="Proc. Natl. Acad. Sci. U.S.A.">
        <title>Analysis of the chromosome sequence of the legume symbiont Sinorhizobium meliloti strain 1021.</title>
        <authorList>
            <person name="Capela D."/>
            <person name="Barloy-Hubler F."/>
            <person name="Gouzy J."/>
            <person name="Bothe G."/>
            <person name="Ampe F."/>
            <person name="Batut J."/>
            <person name="Boistard P."/>
            <person name="Becker A."/>
            <person name="Boutry M."/>
            <person name="Cadieu E."/>
            <person name="Dreano S."/>
            <person name="Gloux S."/>
            <person name="Godrie T."/>
            <person name="Goffeau A."/>
            <person name="Kahn D."/>
            <person name="Kiss E."/>
            <person name="Lelaure V."/>
            <person name="Masuy D."/>
            <person name="Pohl T."/>
            <person name="Portetelle D."/>
            <person name="Puehler A."/>
            <person name="Purnelle B."/>
            <person name="Ramsperger U."/>
            <person name="Renard C."/>
            <person name="Thebault P."/>
            <person name="Vandenbol M."/>
            <person name="Weidner S."/>
            <person name="Galibert F."/>
        </authorList>
    </citation>
    <scope>NUCLEOTIDE SEQUENCE [LARGE SCALE GENOMIC DNA]</scope>
    <source>
        <strain>1021</strain>
    </source>
</reference>
<reference key="3">
    <citation type="journal article" date="2001" name="Science">
        <title>The composite genome of the legume symbiont Sinorhizobium meliloti.</title>
        <authorList>
            <person name="Galibert F."/>
            <person name="Finan T.M."/>
            <person name="Long S.R."/>
            <person name="Puehler A."/>
            <person name="Abola P."/>
            <person name="Ampe F."/>
            <person name="Barloy-Hubler F."/>
            <person name="Barnett M.J."/>
            <person name="Becker A."/>
            <person name="Boistard P."/>
            <person name="Bothe G."/>
            <person name="Boutry M."/>
            <person name="Bowser L."/>
            <person name="Buhrmester J."/>
            <person name="Cadieu E."/>
            <person name="Capela D."/>
            <person name="Chain P."/>
            <person name="Cowie A."/>
            <person name="Davis R.W."/>
            <person name="Dreano S."/>
            <person name="Federspiel N.A."/>
            <person name="Fisher R.F."/>
            <person name="Gloux S."/>
            <person name="Godrie T."/>
            <person name="Goffeau A."/>
            <person name="Golding B."/>
            <person name="Gouzy J."/>
            <person name="Gurjal M."/>
            <person name="Hernandez-Lucas I."/>
            <person name="Hong A."/>
            <person name="Huizar L."/>
            <person name="Hyman R.W."/>
            <person name="Jones T."/>
            <person name="Kahn D."/>
            <person name="Kahn M.L."/>
            <person name="Kalman S."/>
            <person name="Keating D.H."/>
            <person name="Kiss E."/>
            <person name="Komp C."/>
            <person name="Lelaure V."/>
            <person name="Masuy D."/>
            <person name="Palm C."/>
            <person name="Peck M.C."/>
            <person name="Pohl T.M."/>
            <person name="Portetelle D."/>
            <person name="Purnelle B."/>
            <person name="Ramsperger U."/>
            <person name="Surzycki R."/>
            <person name="Thebault P."/>
            <person name="Vandenbol M."/>
            <person name="Vorhoelter F.J."/>
            <person name="Weidner S."/>
            <person name="Wells D.H."/>
            <person name="Wong K."/>
            <person name="Yeh K.-C."/>
            <person name="Batut J."/>
        </authorList>
    </citation>
    <scope>NUCLEOTIDE SEQUENCE [LARGE SCALE GENOMIC DNA]</scope>
    <source>
        <strain>1021</strain>
    </source>
</reference>
<reference key="4">
    <citation type="journal article" date="1993" name="J. Biol. Chem.">
        <title>Isolation and characterization of a novel glutamine synthetase from Rhizobium meliloti.</title>
        <authorList>
            <person name="Shatters R.G."/>
            <person name="Liu Y."/>
            <person name="Kahn M.L."/>
        </authorList>
    </citation>
    <scope>FUNCTION</scope>
    <scope>CATALYTIC ACTIVITY</scope>
    <scope>COFACTOR</scope>
    <scope>ACTIVITY REGULATION</scope>
    <scope>BIOPHYSICOCHEMICAL PROPERTIES</scope>
    <scope>SUBUNIT</scope>
    <source>
        <strain>104A14</strain>
    </source>
</reference>